<name>HFLK_ECOLI</name>
<dbReference type="EMBL" id="U00005">
    <property type="protein sequence ID" value="AAC43399.1"/>
    <property type="molecule type" value="Unassigned_DNA"/>
</dbReference>
<dbReference type="EMBL" id="U14003">
    <property type="protein sequence ID" value="AAA97070.1"/>
    <property type="molecule type" value="Genomic_DNA"/>
</dbReference>
<dbReference type="EMBL" id="U00096">
    <property type="protein sequence ID" value="AAC77131.1"/>
    <property type="molecule type" value="Genomic_DNA"/>
</dbReference>
<dbReference type="EMBL" id="AP009048">
    <property type="protein sequence ID" value="BAE78175.1"/>
    <property type="molecule type" value="Genomic_DNA"/>
</dbReference>
<dbReference type="PIR" id="B43653">
    <property type="entry name" value="B43653"/>
</dbReference>
<dbReference type="RefSeq" id="NP_418595.1">
    <property type="nucleotide sequence ID" value="NC_000913.3"/>
</dbReference>
<dbReference type="RefSeq" id="WP_000312488.1">
    <property type="nucleotide sequence ID" value="NZ_STEB01000013.1"/>
</dbReference>
<dbReference type="PDB" id="7VHP">
    <property type="method" value="EM"/>
    <property type="resolution" value="3.27 A"/>
    <property type="chains" value="E/F/N/O/S/U/g/h/i/j/q/r=1-419"/>
</dbReference>
<dbReference type="PDB" id="7VHQ">
    <property type="method" value="EM"/>
    <property type="resolution" value="3.27 A"/>
    <property type="chains" value="E/F/U=79-345"/>
</dbReference>
<dbReference type="PDB" id="7WI3">
    <property type="method" value="EM"/>
    <property type="resolution" value="4.00 A"/>
    <property type="chains" value="B/F/G/N/R/S/a/b/i/j/k/l=1-419"/>
</dbReference>
<dbReference type="PDB" id="9CZ1">
    <property type="method" value="EM"/>
    <property type="resolution" value="3.50 A"/>
    <property type="chains" value="XA/XC/XE/XG/XI/XK/XM/XO/XQ/XS/XU/XW=1-419"/>
</dbReference>
<dbReference type="PDB" id="9CZ2">
    <property type="method" value="EM"/>
    <property type="resolution" value="4.40 A"/>
    <property type="chains" value="XA/XC/XE/XG/XI/XK/XM/XO/XQ/XS/XU/XW=1-419"/>
</dbReference>
<dbReference type="PDBsum" id="7VHP"/>
<dbReference type="PDBsum" id="7VHQ"/>
<dbReference type="PDBsum" id="7WI3"/>
<dbReference type="PDBsum" id="9CZ1"/>
<dbReference type="PDBsum" id="9CZ2"/>
<dbReference type="EMDB" id="EMD-32520"/>
<dbReference type="SMR" id="P0ABC7"/>
<dbReference type="BioGRID" id="4261253">
    <property type="interactions" value="457"/>
</dbReference>
<dbReference type="ComplexPortal" id="CPX-5046">
    <property type="entry name" value="FtsH-HflKC complex"/>
</dbReference>
<dbReference type="DIP" id="DIP-47481N"/>
<dbReference type="FunCoup" id="P0ABC7">
    <property type="interactions" value="346"/>
</dbReference>
<dbReference type="IntAct" id="P0ABC7">
    <property type="interactions" value="12"/>
</dbReference>
<dbReference type="MINT" id="P0ABC7"/>
<dbReference type="STRING" id="511145.b4174"/>
<dbReference type="MEROPS" id="I87.002"/>
<dbReference type="jPOST" id="P0ABC7"/>
<dbReference type="PaxDb" id="511145-b4174"/>
<dbReference type="EnsemblBacteria" id="AAC77131">
    <property type="protein sequence ID" value="AAC77131"/>
    <property type="gene ID" value="b4174"/>
</dbReference>
<dbReference type="GeneID" id="93777647"/>
<dbReference type="GeneID" id="948698"/>
<dbReference type="KEGG" id="ecj:JW4132"/>
<dbReference type="KEGG" id="eco:b4174"/>
<dbReference type="KEGG" id="ecoc:C3026_22555"/>
<dbReference type="PATRIC" id="fig|1411691.4.peg.2527"/>
<dbReference type="EchoBASE" id="EB0431"/>
<dbReference type="eggNOG" id="COG0330">
    <property type="taxonomic scope" value="Bacteria"/>
</dbReference>
<dbReference type="HOGENOM" id="CLU_039173_1_0_6"/>
<dbReference type="InParanoid" id="P0ABC7"/>
<dbReference type="OMA" id="AWNEPGG"/>
<dbReference type="OrthoDB" id="9779595at2"/>
<dbReference type="PhylomeDB" id="P0ABC7"/>
<dbReference type="BioCyc" id="EcoCyc:EG10436-MONOMER"/>
<dbReference type="BioCyc" id="MetaCyc:EG10436-MONOMER"/>
<dbReference type="PRO" id="PR:P0ABC7"/>
<dbReference type="Proteomes" id="UP000000625">
    <property type="component" value="Chromosome"/>
</dbReference>
<dbReference type="GO" id="GO:0005829">
    <property type="term" value="C:cytosol"/>
    <property type="evidence" value="ECO:0000314"/>
    <property type="project" value="EcoCyc"/>
</dbReference>
<dbReference type="GO" id="GO:0098796">
    <property type="term" value="C:membrane protein complex"/>
    <property type="evidence" value="ECO:0000353"/>
    <property type="project" value="EcoCyc"/>
</dbReference>
<dbReference type="GO" id="GO:0098797">
    <property type="term" value="C:plasma membrane protein complex"/>
    <property type="evidence" value="ECO:0000353"/>
    <property type="project" value="ComplexPortal"/>
</dbReference>
<dbReference type="GO" id="GO:0009408">
    <property type="term" value="P:response to heat"/>
    <property type="evidence" value="ECO:0000270"/>
    <property type="project" value="EcoliWiki"/>
</dbReference>
<dbReference type="CDD" id="cd03404">
    <property type="entry name" value="SPFH_HflK"/>
    <property type="match status" value="1"/>
</dbReference>
<dbReference type="FunFam" id="3.30.479.30:FF:000007">
    <property type="entry name" value="Protein HflK"/>
    <property type="match status" value="1"/>
</dbReference>
<dbReference type="Gene3D" id="3.30.479.30">
    <property type="entry name" value="Band 7 domain"/>
    <property type="match status" value="1"/>
</dbReference>
<dbReference type="InterPro" id="IPR050710">
    <property type="entry name" value="Band7/mec-2_domain"/>
</dbReference>
<dbReference type="InterPro" id="IPR001107">
    <property type="entry name" value="Band_7"/>
</dbReference>
<dbReference type="InterPro" id="IPR036013">
    <property type="entry name" value="Band_7/SPFH_dom_sf"/>
</dbReference>
<dbReference type="InterPro" id="IPR010201">
    <property type="entry name" value="HflK"/>
</dbReference>
<dbReference type="InterPro" id="IPR020980">
    <property type="entry name" value="Membrane_HflK_N"/>
</dbReference>
<dbReference type="InterPro" id="IPR001972">
    <property type="entry name" value="Stomatin_HflK_fam"/>
</dbReference>
<dbReference type="NCBIfam" id="TIGR01933">
    <property type="entry name" value="hflK"/>
    <property type="match status" value="1"/>
</dbReference>
<dbReference type="NCBIfam" id="NF008181">
    <property type="entry name" value="PRK10930.1"/>
    <property type="match status" value="1"/>
</dbReference>
<dbReference type="PANTHER" id="PTHR43327:SF2">
    <property type="entry name" value="MODULATOR OF FTSH PROTEASE HFLK"/>
    <property type="match status" value="1"/>
</dbReference>
<dbReference type="PANTHER" id="PTHR43327">
    <property type="entry name" value="STOMATIN-LIKE PROTEIN 2, MITOCHONDRIAL"/>
    <property type="match status" value="1"/>
</dbReference>
<dbReference type="Pfam" id="PF01145">
    <property type="entry name" value="Band_7"/>
    <property type="match status" value="1"/>
</dbReference>
<dbReference type="Pfam" id="PF12221">
    <property type="entry name" value="HflK_N"/>
    <property type="match status" value="1"/>
</dbReference>
<dbReference type="PRINTS" id="PR00721">
    <property type="entry name" value="STOMATIN"/>
</dbReference>
<dbReference type="SMART" id="SM00244">
    <property type="entry name" value="PHB"/>
    <property type="match status" value="1"/>
</dbReference>
<dbReference type="SUPFAM" id="SSF117892">
    <property type="entry name" value="Band 7/SPFH domain"/>
    <property type="match status" value="1"/>
</dbReference>
<evidence type="ECO:0000256" key="1">
    <source>
        <dbReference type="SAM" id="MobiDB-lite"/>
    </source>
</evidence>
<evidence type="ECO:0000269" key="2">
    <source>
    </source>
</evidence>
<evidence type="ECO:0000269" key="3">
    <source>
    </source>
</evidence>
<evidence type="ECO:0000269" key="4">
    <source>
    </source>
</evidence>
<evidence type="ECO:0000269" key="5">
    <source>
    </source>
</evidence>
<evidence type="ECO:0000305" key="6"/>
<evidence type="ECO:0000305" key="7">
    <source>
    </source>
</evidence>
<evidence type="ECO:0007829" key="8">
    <source>
        <dbReference type="PDB" id="7VHP"/>
    </source>
</evidence>
<comment type="function">
    <text evidence="3">HflC and HflK help govern the stability of phage lambda cII protein, and thereby control the lysogenization frequency of phage lambda. HflKC inhibits the SecY-degrading activity of FtsH, possibly helping quality control of integral membrane proteins.</text>
</comment>
<comment type="subunit">
    <text evidence="2 3 5">HflC and HflK interact to form a complex, originally called HflA, now called HflKC. HflKC interacts with FtsH; complex formation is stimulated by ATP, and with YccA.</text>
</comment>
<comment type="interaction">
    <interactant intactId="EBI-558599">
        <id>P0ABC7</id>
    </interactant>
    <interactant intactId="EBI-548381">
        <id>P0AAI3</id>
        <label>ftsH</label>
    </interactant>
    <organismsDiffer>false</organismsDiffer>
    <experiments>7</experiments>
</comment>
<comment type="interaction">
    <interactant intactId="EBI-558599">
        <id>P0ABC7</id>
    </interactant>
    <interactant intactId="EBI-551642">
        <id>P0ABC3</id>
        <label>hflC</label>
    </interactant>
    <organismsDiffer>false</organismsDiffer>
    <experiments>2</experiments>
</comment>
<comment type="subcellular location">
    <subcellularLocation>
        <location evidence="3">Cell inner membrane</location>
        <topology evidence="3">Single-pass type II membrane protein</topology>
    </subcellularLocation>
</comment>
<comment type="miscellaneous">
    <text>Integration of this protein into the membrane depends on SecA, SecY and SecD but not on SecB or FtsY. HflK is unstable in the absence of HflC.</text>
</comment>
<comment type="similarity">
    <text evidence="6">Belongs to the band 7/mec-2 family. HflK subfamily.</text>
</comment>
<comment type="caution">
    <text evidence="7">Was originally (PubMed:2973057) thought to be a protease. However, removal of residues '165-200' of complex member HflC (a ClpP-protease-like motif) does not alter the lysogenization process, and in vitro studies show no evidence of a protease activity for the isolated HflKC complex.</text>
</comment>
<keyword id="KW-0002">3D-structure</keyword>
<keyword id="KW-0997">Cell inner membrane</keyword>
<keyword id="KW-1003">Cell membrane</keyword>
<keyword id="KW-0472">Membrane</keyword>
<keyword id="KW-1185">Reference proteome</keyword>
<keyword id="KW-0735">Signal-anchor</keyword>
<keyword id="KW-0812">Transmembrane</keyword>
<keyword id="KW-1133">Transmembrane helix</keyword>
<feature type="chain" id="PRO_0000094085" description="Modulator of FtsH protease HflK">
    <location>
        <begin position="1"/>
        <end position="419"/>
    </location>
</feature>
<feature type="topological domain" description="Cytoplasmic" evidence="4">
    <location>
        <begin position="1"/>
        <end position="79"/>
    </location>
</feature>
<feature type="transmembrane region" description="Helical; Signal-anchor for type II membrane protein" evidence="6">
    <location>
        <begin position="80"/>
        <end position="100"/>
    </location>
</feature>
<feature type="topological domain" description="Periplasmic" evidence="4">
    <location>
        <begin position="101"/>
        <end position="419"/>
    </location>
</feature>
<feature type="region of interest" description="Disordered" evidence="1">
    <location>
        <begin position="1"/>
        <end position="75"/>
    </location>
</feature>
<feature type="region of interest" description="Disordered" evidence="1">
    <location>
        <begin position="364"/>
        <end position="419"/>
    </location>
</feature>
<feature type="compositionally biased region" description="Polar residues" evidence="1">
    <location>
        <begin position="1"/>
        <end position="10"/>
    </location>
</feature>
<feature type="compositionally biased region" description="Gly residues" evidence="1">
    <location>
        <begin position="53"/>
        <end position="68"/>
    </location>
</feature>
<feature type="compositionally biased region" description="Low complexity" evidence="1">
    <location>
        <begin position="383"/>
        <end position="397"/>
    </location>
</feature>
<feature type="mutagenesis site" description="In hflK13; stabilizes overproduced SecY but not overproduced cII protein." evidence="3">
    <original>A</original>
    <variation>V</variation>
    <location>
        <position position="145"/>
    </location>
</feature>
<feature type="helix" evidence="8">
    <location>
        <begin position="80"/>
        <end position="96"/>
    </location>
</feature>
<feature type="strand" evidence="8">
    <location>
        <begin position="104"/>
        <end position="110"/>
    </location>
</feature>
<feature type="strand" evidence="8">
    <location>
        <begin position="113"/>
        <end position="118"/>
    </location>
</feature>
<feature type="turn" evidence="8">
    <location>
        <begin position="127"/>
        <end position="129"/>
    </location>
</feature>
<feature type="strand" evidence="8">
    <location>
        <begin position="130"/>
        <end position="136"/>
    </location>
</feature>
<feature type="strand" evidence="8">
    <location>
        <begin position="141"/>
        <end position="150"/>
    </location>
</feature>
<feature type="strand" evidence="8">
    <location>
        <begin position="156"/>
        <end position="167"/>
    </location>
</feature>
<feature type="helix" evidence="8">
    <location>
        <begin position="170"/>
        <end position="175"/>
    </location>
</feature>
<feature type="strand" evidence="8">
    <location>
        <begin position="176"/>
        <end position="179"/>
    </location>
</feature>
<feature type="helix" evidence="8">
    <location>
        <begin position="180"/>
        <end position="198"/>
    </location>
</feature>
<feature type="helix" evidence="8">
    <location>
        <begin position="201"/>
        <end position="205"/>
    </location>
</feature>
<feature type="turn" evidence="8">
    <location>
        <begin position="206"/>
        <end position="208"/>
    </location>
</feature>
<feature type="helix" evidence="8">
    <location>
        <begin position="209"/>
        <end position="223"/>
    </location>
</feature>
<feature type="turn" evidence="8">
    <location>
        <begin position="225"/>
        <end position="228"/>
    </location>
</feature>
<feature type="strand" evidence="8">
    <location>
        <begin position="230"/>
        <end position="240"/>
    </location>
</feature>
<feature type="helix" evidence="8">
    <location>
        <begin position="245"/>
        <end position="317"/>
    </location>
</feature>
<feature type="helix" evidence="8">
    <location>
        <begin position="319"/>
        <end position="337"/>
    </location>
</feature>
<feature type="strand" evidence="8">
    <location>
        <begin position="338"/>
        <end position="342"/>
    </location>
</feature>
<sequence length="419" mass="45545">MAWNQPGNNGQDRDPWGSSKPGGNSEGNGNKGGRDQGPPDLDDIFRKLSKKLGGLGGGKGTGSGGGSSSQGPRPQLGGRVVTIAAAAIVIIWAASGFYTIKEAERGVVTRFGKFSHLVEPGLNWKPTFIDEVKPVNVEAVRELAASGVMLTSDENVVRVEMNVQYRVTNPEKYLYSVTSPDDSLRQATDSALRGVIGKYTMDRILTEGRTVIRSDTQRELEETIRPYDMGITLLDVNFQAARPPEEVKAAFDDAIAARENEQQYIREAEAYTNEVQPRANGQAQRILEEARAYKAQTILEAQGEVARFAKLLPEYKAAPEITRERLYIETMEKVLGNTRKVLVNDKGGNLMVLPLDQMLKGGNAPAAKSDNGASNLLRLPPASSSTTSGASNTSSTSQGDIMDQRRANAQRNDYQRQGE</sequence>
<reference key="1">
    <citation type="journal article" date="1993" name="Proc. Natl. Acad. Sci. U.S.A.">
        <title>The Escherichia coli hflA locus encodes a putative GTP-binding protein and two membrane proteins, one of which contains a protease-like domain.</title>
        <authorList>
            <person name="Noble J.A."/>
            <person name="Innis M.A."/>
            <person name="Koonin E.V."/>
            <person name="Rudd K.E."/>
            <person name="Banuett F."/>
            <person name="Herskowitz I."/>
        </authorList>
    </citation>
    <scope>NUCLEOTIDE SEQUENCE [GENOMIC DNA]</scope>
</reference>
<reference key="2">
    <citation type="journal article" date="1995" name="Nucleic Acids Res.">
        <title>Analysis of the Escherichia coli genome VI: DNA sequence of the region from 92.8 through 100 minutes.</title>
        <authorList>
            <person name="Burland V.D."/>
            <person name="Plunkett G. III"/>
            <person name="Sofia H.J."/>
            <person name="Daniels D.L."/>
            <person name="Blattner F.R."/>
        </authorList>
    </citation>
    <scope>NUCLEOTIDE SEQUENCE [LARGE SCALE GENOMIC DNA]</scope>
    <source>
        <strain>K12 / MG1655 / ATCC 47076</strain>
    </source>
</reference>
<reference key="3">
    <citation type="journal article" date="1997" name="Science">
        <title>The complete genome sequence of Escherichia coli K-12.</title>
        <authorList>
            <person name="Blattner F.R."/>
            <person name="Plunkett G. III"/>
            <person name="Bloch C.A."/>
            <person name="Perna N.T."/>
            <person name="Burland V."/>
            <person name="Riley M."/>
            <person name="Collado-Vides J."/>
            <person name="Glasner J.D."/>
            <person name="Rode C.K."/>
            <person name="Mayhew G.F."/>
            <person name="Gregor J."/>
            <person name="Davis N.W."/>
            <person name="Kirkpatrick H.A."/>
            <person name="Goeden M.A."/>
            <person name="Rose D.J."/>
            <person name="Mau B."/>
            <person name="Shao Y."/>
        </authorList>
    </citation>
    <scope>NUCLEOTIDE SEQUENCE [LARGE SCALE GENOMIC DNA]</scope>
    <source>
        <strain>K12 / MG1655 / ATCC 47076</strain>
    </source>
</reference>
<reference key="4">
    <citation type="journal article" date="2006" name="Mol. Syst. Biol.">
        <title>Highly accurate genome sequences of Escherichia coli K-12 strains MG1655 and W3110.</title>
        <authorList>
            <person name="Hayashi K."/>
            <person name="Morooka N."/>
            <person name="Yamamoto Y."/>
            <person name="Fujita K."/>
            <person name="Isono K."/>
            <person name="Choi S."/>
            <person name="Ohtsubo E."/>
            <person name="Baba T."/>
            <person name="Wanner B.L."/>
            <person name="Mori H."/>
            <person name="Horiuchi T."/>
        </authorList>
    </citation>
    <scope>NUCLEOTIDE SEQUENCE [LARGE SCALE GENOMIC DNA]</scope>
    <source>
        <strain>K12 / W3110 / ATCC 27325 / DSM 5911</strain>
    </source>
</reference>
<reference key="5">
    <citation type="journal article" date="1987" name="J. Bacteriol.">
        <title>Identification of polypeptides encoded by an Escherichia coli locus (hflA) that governs the lysis-lysogeny decision of bacteriophage lambda.</title>
        <authorList>
            <person name="Banuett F."/>
            <person name="Herskowitz I."/>
        </authorList>
    </citation>
    <scope>CHARACTERIZATION</scope>
</reference>
<reference key="6">
    <citation type="journal article" date="1988" name="Proc. Natl. Acad. Sci. U.S.A.">
        <title>Cleavage of the cII protein of phage lambda by purified HflA protease: control of the switch between lysis and lysogeny.</title>
        <authorList>
            <person name="Cheng H.H."/>
            <person name="Muhlrad P.J."/>
            <person name="Hoyt M.A."/>
            <person name="Echols H."/>
        </authorList>
    </citation>
    <scope>INTERACTION WITH HFLC</scope>
    <scope>SUGGESTION OF PROTEASE ACTIVITY</scope>
    <source>
        <strain>W3102</strain>
        <strain>X9368</strain>
    </source>
</reference>
<reference key="7">
    <citation type="journal article" date="1996" name="EMBO J.">
        <title>A protease complex in the Escherichia coli plasma membrane: HflKC (HflA) forms a complex with FtsH (HflB), regulating its proteolytic activity against SecY.</title>
        <authorList>
            <person name="Kihara A."/>
            <person name="Akiyama Y."/>
            <person name="Ito K."/>
        </authorList>
    </citation>
    <scope>FUNCTION</scope>
    <scope>INTERACTION WITH HFLC AND FTSH</scope>
    <scope>SUBCELLULAR LOCATION</scope>
    <scope>MUTAGENESIS OF ALA-145</scope>
    <source>
        <strain>K12 / CSH26 / AD16</strain>
    </source>
</reference>
<reference key="8">
    <citation type="journal article" date="1997" name="Proc. Natl. Acad. Sci. U.S.A.">
        <title>Host regulation of lysogenic decision in bacteriophage lambda: transmembrane modulation of FtsH (HflB), the cII degrading protease, by HflKC (HflA).</title>
        <authorList>
            <person name="Kihara A."/>
            <person name="Akiyama Y."/>
            <person name="Ito K."/>
        </authorList>
    </citation>
    <scope>TOPOLOGY</scope>
    <scope>LACK OF PROTEASE ACTIVITY</scope>
    <source>
        <strain>K12 / CSH26 / AD16</strain>
    </source>
</reference>
<reference key="9">
    <citation type="journal article" date="1998" name="J. Biol. Chem.">
        <title>Translocation, folding, and stability of the HflKC complex with signal anchor topogenic sequences.</title>
        <authorList>
            <person name="Kihara A."/>
            <person name="Ito K."/>
        </authorList>
    </citation>
    <scope>INSTABILITY IN THE ABSENCE OF HFLC</scope>
    <scope>MEMBRANE TRANSLOCATION MECHANISM</scope>
    <source>
        <strain>K12 / CSH26 / AD16</strain>
        <strain>K12 / MC4100</strain>
    </source>
</reference>
<reference key="10">
    <citation type="journal article" date="1998" name="J. Mol. Biol.">
        <title>Different pathways for protein degradation by the FtsH/HflKC membrane-embedded protease complex: an implication from the interference by a mutant form of a new substrate protein, YccA.</title>
        <authorList>
            <person name="Kihara A."/>
            <person name="Akiyama Y."/>
            <person name="Ito K."/>
        </authorList>
    </citation>
    <scope>INTERACTION WITH YCCA</scope>
    <source>
        <strain>K12 / CSH26 / AD16</strain>
    </source>
</reference>
<reference key="11">
    <citation type="journal article" date="2009" name="J. Biochem.">
        <title>Quality control of cytoplasmic membrane proteins in Escherichia coli.</title>
        <authorList>
            <person name="Akiyama Y."/>
        </authorList>
    </citation>
    <scope>REVIEW</scope>
</reference>
<proteinExistence type="evidence at protein level"/>
<protein>
    <recommendedName>
        <fullName>Modulator of FtsH protease HflK</fullName>
    </recommendedName>
</protein>
<organism>
    <name type="scientific">Escherichia coli (strain K12)</name>
    <dbReference type="NCBI Taxonomy" id="83333"/>
    <lineage>
        <taxon>Bacteria</taxon>
        <taxon>Pseudomonadati</taxon>
        <taxon>Pseudomonadota</taxon>
        <taxon>Gammaproteobacteria</taxon>
        <taxon>Enterobacterales</taxon>
        <taxon>Enterobacteriaceae</taxon>
        <taxon>Escherichia</taxon>
    </lineage>
</organism>
<accession>P0ABC7</accession>
<accession>P25662</accession>
<accession>Q2M6D1</accession>
<gene>
    <name type="primary">hflK</name>
    <name type="synonym">hflA</name>
    <name type="ordered locus">b4174</name>
    <name type="ordered locus">JW4132</name>
</gene>